<gene>
    <name evidence="1" type="primary">cpcS2</name>
    <name type="ordered locus">Tery_3908</name>
</gene>
<protein>
    <recommendedName>
        <fullName evidence="1">Chromophore lyase CpcS/CpeS 2</fullName>
        <ecNumber evidence="1">4.-.-.-</ecNumber>
    </recommendedName>
</protein>
<accession>Q10XT3</accession>
<evidence type="ECO:0000255" key="1">
    <source>
        <dbReference type="HAMAP-Rule" id="MF_01459"/>
    </source>
</evidence>
<reference key="1">
    <citation type="journal article" date="2015" name="Proc. Natl. Acad. Sci. U.S.A.">
        <title>Trichodesmium genome maintains abundant, widespread noncoding DNA in situ, despite oligotrophic lifestyle.</title>
        <authorList>
            <person name="Walworth N."/>
            <person name="Pfreundt U."/>
            <person name="Nelson W.C."/>
            <person name="Mincer T."/>
            <person name="Heidelberg J.F."/>
            <person name="Fu F."/>
            <person name="Waterbury J.B."/>
            <person name="Glavina del Rio T."/>
            <person name="Goodwin L."/>
            <person name="Kyrpides N.C."/>
            <person name="Land M.L."/>
            <person name="Woyke T."/>
            <person name="Hutchins D.A."/>
            <person name="Hess W.R."/>
            <person name="Webb E.A."/>
        </authorList>
    </citation>
    <scope>NUCLEOTIDE SEQUENCE [LARGE SCALE GENOMIC DNA]</scope>
    <source>
        <strain>IMS101</strain>
    </source>
</reference>
<name>CPXS2_TRIEI</name>
<feature type="chain" id="PRO_0000403147" description="Chromophore lyase CpcS/CpeS 2">
    <location>
        <begin position="1"/>
        <end position="196"/>
    </location>
</feature>
<dbReference type="EC" id="4.-.-.-" evidence="1"/>
<dbReference type="EMBL" id="CP000393">
    <property type="protein sequence ID" value="ABG52941.1"/>
    <property type="molecule type" value="Genomic_DNA"/>
</dbReference>
<dbReference type="RefSeq" id="WP_011613271.1">
    <property type="nucleotide sequence ID" value="NC_008312.1"/>
</dbReference>
<dbReference type="SMR" id="Q10XT3"/>
<dbReference type="STRING" id="203124.Tery_3908"/>
<dbReference type="KEGG" id="ter:Tery_3908"/>
<dbReference type="eggNOG" id="ENOG502Z8E6">
    <property type="taxonomic scope" value="Bacteria"/>
</dbReference>
<dbReference type="HOGENOM" id="CLU_096258_0_0_3"/>
<dbReference type="OrthoDB" id="554080at2"/>
<dbReference type="GO" id="GO:0016829">
    <property type="term" value="F:lyase activity"/>
    <property type="evidence" value="ECO:0007669"/>
    <property type="project" value="UniProtKB-KW"/>
</dbReference>
<dbReference type="CDD" id="cd19433">
    <property type="entry name" value="lipocalin_CpcS-CpeS"/>
    <property type="match status" value="1"/>
</dbReference>
<dbReference type="Gene3D" id="2.40.128.20">
    <property type="match status" value="1"/>
</dbReference>
<dbReference type="HAMAP" id="MF_01459">
    <property type="entry name" value="Chrphore_lyase_CpxS"/>
    <property type="match status" value="1"/>
</dbReference>
<dbReference type="InterPro" id="IPR012674">
    <property type="entry name" value="Calycin"/>
</dbReference>
<dbReference type="InterPro" id="IPR018536">
    <property type="entry name" value="CpcS/CpeS"/>
</dbReference>
<dbReference type="Pfam" id="PF09367">
    <property type="entry name" value="CpeS"/>
    <property type="match status" value="1"/>
</dbReference>
<keyword id="KW-0456">Lyase</keyword>
<organism>
    <name type="scientific">Trichodesmium erythraeum (strain IMS101)</name>
    <dbReference type="NCBI Taxonomy" id="203124"/>
    <lineage>
        <taxon>Bacteria</taxon>
        <taxon>Bacillati</taxon>
        <taxon>Cyanobacteriota</taxon>
        <taxon>Cyanophyceae</taxon>
        <taxon>Oscillatoriophycideae</taxon>
        <taxon>Oscillatoriales</taxon>
        <taxon>Microcoleaceae</taxon>
        <taxon>Trichodesmium</taxon>
    </lineage>
</organism>
<sequence length="196" mass="22385">MNAMEFFQRSAGKWRSQRTTHHLAFRQAEIGHSDIEVINLDAKDPKILEICKMHEIDPSLAAGGAFVTWDGSMAWDKDDENHKGSTVFAIVPDSENPRSGRMLRERGYAEIIPVVGRFEMDDEDGLNLITEYETMSSIERFWFTSPNLRMRSSAVKRFGGFNTSTFCTEVRLVESNSDSQTETPHVDLEYYSAFGW</sequence>
<proteinExistence type="inferred from homology"/>
<comment type="function">
    <text evidence="1">Covalently attaches a chromophore to Cys residue(s) of phycobiliproteins.</text>
</comment>
<comment type="similarity">
    <text evidence="1">Belongs to the CpcS/CpeS biliprotein lyase family.</text>
</comment>